<dbReference type="EMBL" id="AF125041">
    <property type="protein sequence ID" value="AAF00585.1"/>
    <property type="molecule type" value="mRNA"/>
</dbReference>
<dbReference type="RefSeq" id="NP_001009218.1">
    <property type="nucleotide sequence ID" value="NM_001009218.1"/>
</dbReference>
<dbReference type="SMR" id="Q9TTE2"/>
<dbReference type="STRING" id="9940.ENSOARP00000016893"/>
<dbReference type="GlyCosmos" id="Q9TTE2">
    <property type="glycosylation" value="4 sites, No reported glycans"/>
</dbReference>
<dbReference type="PaxDb" id="9940-ENSOARP00000016893"/>
<dbReference type="GeneID" id="443048"/>
<dbReference type="KEGG" id="oas:443048"/>
<dbReference type="CTD" id="1634"/>
<dbReference type="eggNOG" id="KOG0619">
    <property type="taxonomic scope" value="Eukaryota"/>
</dbReference>
<dbReference type="OrthoDB" id="1111193at2759"/>
<dbReference type="Proteomes" id="UP000002356">
    <property type="component" value="Unplaced"/>
</dbReference>
<dbReference type="GO" id="GO:0005615">
    <property type="term" value="C:extracellular space"/>
    <property type="evidence" value="ECO:0007669"/>
    <property type="project" value="TreeGrafter"/>
</dbReference>
<dbReference type="FunFam" id="3.80.10.10:FF:000038">
    <property type="entry name" value="Biglycan"/>
    <property type="match status" value="1"/>
</dbReference>
<dbReference type="Gene3D" id="3.80.10.10">
    <property type="entry name" value="Ribonuclease Inhibitor"/>
    <property type="match status" value="1"/>
</dbReference>
<dbReference type="InterPro" id="IPR001611">
    <property type="entry name" value="Leu-rich_rpt"/>
</dbReference>
<dbReference type="InterPro" id="IPR003591">
    <property type="entry name" value="Leu-rich_rpt_typical-subtyp"/>
</dbReference>
<dbReference type="InterPro" id="IPR032675">
    <property type="entry name" value="LRR_dom_sf"/>
</dbReference>
<dbReference type="InterPro" id="IPR000372">
    <property type="entry name" value="LRRNT"/>
</dbReference>
<dbReference type="InterPro" id="IPR050333">
    <property type="entry name" value="SLRP"/>
</dbReference>
<dbReference type="InterPro" id="IPR016352">
    <property type="entry name" value="SLRP_I_decor/aspor/byglycan"/>
</dbReference>
<dbReference type="PANTHER" id="PTHR45712">
    <property type="entry name" value="AGAP008170-PA"/>
    <property type="match status" value="1"/>
</dbReference>
<dbReference type="PANTHER" id="PTHR45712:SF14">
    <property type="entry name" value="DECORIN"/>
    <property type="match status" value="1"/>
</dbReference>
<dbReference type="Pfam" id="PF13855">
    <property type="entry name" value="LRR_8"/>
    <property type="match status" value="3"/>
</dbReference>
<dbReference type="Pfam" id="PF01462">
    <property type="entry name" value="LRRNT"/>
    <property type="match status" value="1"/>
</dbReference>
<dbReference type="PIRSF" id="PIRSF002490">
    <property type="entry name" value="SLRP_I"/>
    <property type="match status" value="1"/>
</dbReference>
<dbReference type="SMART" id="SM00364">
    <property type="entry name" value="LRR_BAC"/>
    <property type="match status" value="4"/>
</dbReference>
<dbReference type="SMART" id="SM00369">
    <property type="entry name" value="LRR_TYP"/>
    <property type="match status" value="7"/>
</dbReference>
<dbReference type="SMART" id="SM00013">
    <property type="entry name" value="LRRNT"/>
    <property type="match status" value="1"/>
</dbReference>
<dbReference type="SUPFAM" id="SSF52058">
    <property type="entry name" value="L domain-like"/>
    <property type="match status" value="1"/>
</dbReference>
<dbReference type="PROSITE" id="PS51450">
    <property type="entry name" value="LRR"/>
    <property type="match status" value="8"/>
</dbReference>
<gene>
    <name type="primary">DCN</name>
</gene>
<reference key="1">
    <citation type="journal article" date="2000" name="Am. J. Physiol.">
        <title>Characterization of decorin mRNA in pregnant intrauterine tissues of the ewe and regulation by steroids.</title>
        <authorList>
            <person name="Wu W.X."/>
            <person name="Zhang Q."/>
            <person name="Unno N."/>
            <person name="Derks J.B."/>
            <person name="Nathanielsz P.W."/>
        </authorList>
    </citation>
    <scope>NUCLEOTIDE SEQUENCE [MRNA]</scope>
    <source>
        <tissue>Myometrium</tissue>
    </source>
</reference>
<accession>Q9TTE2</accession>
<name>PGS2_SHEEP</name>
<sequence length="360" mass="39972">MKATIIFFLVAQVSWAGPFQQKGLFDFMLEDEASGIGPEERFHEVPELEPMGPVCPFRCQCHLRVVQCSDLGLEKVPKDLPPDTALLDLQNNKITEIKDGDFKNLKNLHTLILINNKISKISPGAFAPLVKLERLYLSKNQLKELPEKMPKTLQELRVHENEITKVRKSVFNGLNQMIVVELGTNPLKSSGIENGAFQGMKKLSYIRIADTNITTIPQGLPPSLTELHLDGNKITKVDAASLKGLNNLAKLGLSFNSISAVDNGSLANTPHLRELHLNNNKLVKVPGGLADHKYIQVVYLHNNNISAIGSNDFCPPGYNTKKASYSGVSLFSNPVQYWEIQPSTFRCVYVRAAVQLGNYK</sequence>
<evidence type="ECO:0000250" key="1"/>
<evidence type="ECO:0000250" key="2">
    <source>
        <dbReference type="UniProtKB" id="P07585"/>
    </source>
</evidence>
<evidence type="ECO:0000250" key="3">
    <source>
        <dbReference type="UniProtKB" id="Q01129"/>
    </source>
</evidence>
<evidence type="ECO:0000255" key="4"/>
<evidence type="ECO:0000305" key="5"/>
<keyword id="KW-1015">Disulfide bond</keyword>
<keyword id="KW-0272">Extracellular matrix</keyword>
<keyword id="KW-0325">Glycoprotein</keyword>
<keyword id="KW-0433">Leucine-rich repeat</keyword>
<keyword id="KW-0654">Proteoglycan</keyword>
<keyword id="KW-1185">Reference proteome</keyword>
<keyword id="KW-0677">Repeat</keyword>
<keyword id="KW-0964">Secreted</keyword>
<keyword id="KW-0732">Signal</keyword>
<feature type="signal peptide" evidence="3">
    <location>
        <begin position="1"/>
        <end position="16"/>
    </location>
</feature>
<feature type="propeptide" id="PRO_0000032721" evidence="3">
    <location>
        <begin position="17"/>
        <end position="30"/>
    </location>
</feature>
<feature type="chain" id="PRO_0000032722" description="Decorin">
    <location>
        <begin position="31"/>
        <end position="360"/>
    </location>
</feature>
<feature type="repeat" description="LRR 1">
    <location>
        <begin position="74"/>
        <end position="94"/>
    </location>
</feature>
<feature type="repeat" description="LRR 2">
    <location>
        <begin position="95"/>
        <end position="118"/>
    </location>
</feature>
<feature type="repeat" description="LRR 3">
    <location>
        <begin position="119"/>
        <end position="142"/>
    </location>
</feature>
<feature type="repeat" description="LRR 4">
    <location>
        <begin position="143"/>
        <end position="163"/>
    </location>
</feature>
<feature type="repeat" description="LRR 5">
    <location>
        <begin position="164"/>
        <end position="187"/>
    </location>
</feature>
<feature type="repeat" description="LRR 6">
    <location>
        <begin position="188"/>
        <end position="213"/>
    </location>
</feature>
<feature type="repeat" description="LRR 7">
    <location>
        <begin position="214"/>
        <end position="234"/>
    </location>
</feature>
<feature type="repeat" description="LRR 8">
    <location>
        <begin position="235"/>
        <end position="258"/>
    </location>
</feature>
<feature type="repeat" description="LRR 9">
    <location>
        <begin position="259"/>
        <end position="282"/>
    </location>
</feature>
<feature type="repeat" description="LRR 10">
    <location>
        <begin position="283"/>
        <end position="305"/>
    </location>
</feature>
<feature type="repeat" description="LRR 11">
    <location>
        <begin position="306"/>
        <end position="335"/>
    </location>
</feature>
<feature type="repeat" description="LRR 12">
    <location>
        <begin position="336"/>
        <end position="360"/>
    </location>
</feature>
<feature type="glycosylation site" description="O-linked (Xyl...) (glycosaminoglycan) serine" evidence="2">
    <location>
        <position position="34"/>
    </location>
</feature>
<feature type="glycosylation site" description="N-linked (GlcNAc...) asparagine" evidence="4">
    <location>
        <position position="212"/>
    </location>
</feature>
<feature type="glycosylation site" description="N-linked (GlcNAc...) asparagine" evidence="4">
    <location>
        <position position="263"/>
    </location>
</feature>
<feature type="glycosylation site" description="N-linked (GlcNAc...) asparagine" evidence="4">
    <location>
        <position position="304"/>
    </location>
</feature>
<feature type="disulfide bond" evidence="1">
    <location>
        <begin position="55"/>
        <end position="61"/>
    </location>
</feature>
<feature type="disulfide bond" evidence="1">
    <location>
        <begin position="59"/>
        <end position="68"/>
    </location>
</feature>
<feature type="disulfide bond" evidence="1">
    <location>
        <begin position="314"/>
        <end position="347"/>
    </location>
</feature>
<comment type="function">
    <text evidence="1">May affect the rate of fibrils formation.</text>
</comment>
<comment type="subunit">
    <text evidence="1">Binds to type I and type II collagen, fibronectin and TGF-beta. Forms a ternary complex with MFAP2 and ELN. Interacts with DPT (By similarity).</text>
</comment>
<comment type="subcellular location">
    <subcellularLocation>
        <location evidence="1">Secreted</location>
        <location evidence="1">Extracellular space</location>
        <location evidence="1">Extracellular matrix</location>
    </subcellularLocation>
    <subcellularLocation>
        <location evidence="2">Secreted</location>
    </subcellularLocation>
</comment>
<comment type="PTM">
    <text evidence="1">The attached glycosaminoglycan chain can be either chondroitin sulfate or dermatan sulfate depending upon the tissue of origin.</text>
</comment>
<comment type="similarity">
    <text evidence="5">Belongs to the small leucine-rich proteoglycan (SLRP) family. SLRP class I subfamily.</text>
</comment>
<organism>
    <name type="scientific">Ovis aries</name>
    <name type="common">Sheep</name>
    <dbReference type="NCBI Taxonomy" id="9940"/>
    <lineage>
        <taxon>Eukaryota</taxon>
        <taxon>Metazoa</taxon>
        <taxon>Chordata</taxon>
        <taxon>Craniata</taxon>
        <taxon>Vertebrata</taxon>
        <taxon>Euteleostomi</taxon>
        <taxon>Mammalia</taxon>
        <taxon>Eutheria</taxon>
        <taxon>Laurasiatheria</taxon>
        <taxon>Artiodactyla</taxon>
        <taxon>Ruminantia</taxon>
        <taxon>Pecora</taxon>
        <taxon>Bovidae</taxon>
        <taxon>Caprinae</taxon>
        <taxon>Ovis</taxon>
    </lineage>
</organism>
<protein>
    <recommendedName>
        <fullName>Decorin</fullName>
    </recommendedName>
    <alternativeName>
        <fullName>Bone proteoglycan II</fullName>
    </alternativeName>
    <alternativeName>
        <fullName>PG-S2</fullName>
    </alternativeName>
    <alternativeName>
        <fullName>PG40</fullName>
    </alternativeName>
</protein>
<proteinExistence type="evidence at transcript level"/>